<proteinExistence type="evidence at transcript level"/>
<accession>Q9GMY7</accession>
<dbReference type="EC" id="3.4.23.1"/>
<dbReference type="EMBL" id="AB047245">
    <property type="protein sequence ID" value="BAB11751.1"/>
    <property type="molecule type" value="mRNA"/>
</dbReference>
<dbReference type="SMR" id="Q9GMY7"/>
<dbReference type="FunCoup" id="Q9GMY7">
    <property type="interactions" value="79"/>
</dbReference>
<dbReference type="MEROPS" id="A01.001"/>
<dbReference type="Ensembl" id="ENSRFET00010002876.1">
    <property type="protein sequence ID" value="ENSRFEP00010002613.1"/>
    <property type="gene ID" value="ENSRFEG00010001876.1"/>
</dbReference>
<dbReference type="GeneTree" id="ENSGT00940000155036"/>
<dbReference type="InParanoid" id="Q9GMY7"/>
<dbReference type="OMA" id="MGFWTID"/>
<dbReference type="OrthoDB" id="771136at2759"/>
<dbReference type="Proteomes" id="UP000472240">
    <property type="component" value="Chromosome 11"/>
</dbReference>
<dbReference type="GO" id="GO:0005576">
    <property type="term" value="C:extracellular region"/>
    <property type="evidence" value="ECO:0007669"/>
    <property type="project" value="UniProtKB-SubCell"/>
</dbReference>
<dbReference type="GO" id="GO:0004190">
    <property type="term" value="F:aspartic-type endopeptidase activity"/>
    <property type="evidence" value="ECO:0007669"/>
    <property type="project" value="UniProtKB-KW"/>
</dbReference>
<dbReference type="GO" id="GO:0007586">
    <property type="term" value="P:digestion"/>
    <property type="evidence" value="ECO:0007669"/>
    <property type="project" value="UniProtKB-KW"/>
</dbReference>
<dbReference type="GO" id="GO:0006508">
    <property type="term" value="P:proteolysis"/>
    <property type="evidence" value="ECO:0007669"/>
    <property type="project" value="UniProtKB-KW"/>
</dbReference>
<dbReference type="CDD" id="cd05478">
    <property type="entry name" value="pepsin_A"/>
    <property type="match status" value="1"/>
</dbReference>
<dbReference type="FunFam" id="2.40.70.10:FF:000006">
    <property type="entry name" value="Cathepsin E"/>
    <property type="match status" value="1"/>
</dbReference>
<dbReference type="FunFam" id="2.40.70.10:FF:000004">
    <property type="entry name" value="Pepsin A"/>
    <property type="match status" value="1"/>
</dbReference>
<dbReference type="Gene3D" id="6.10.140.60">
    <property type="match status" value="1"/>
</dbReference>
<dbReference type="Gene3D" id="2.40.70.10">
    <property type="entry name" value="Acid Proteases"/>
    <property type="match status" value="2"/>
</dbReference>
<dbReference type="InterPro" id="IPR001461">
    <property type="entry name" value="Aspartic_peptidase_A1"/>
</dbReference>
<dbReference type="InterPro" id="IPR001969">
    <property type="entry name" value="Aspartic_peptidase_AS"/>
</dbReference>
<dbReference type="InterPro" id="IPR012848">
    <property type="entry name" value="Aspartic_peptidase_N"/>
</dbReference>
<dbReference type="InterPro" id="IPR034162">
    <property type="entry name" value="Pepsin_A"/>
</dbReference>
<dbReference type="InterPro" id="IPR033121">
    <property type="entry name" value="PEPTIDASE_A1"/>
</dbReference>
<dbReference type="InterPro" id="IPR021109">
    <property type="entry name" value="Peptidase_aspartic_dom_sf"/>
</dbReference>
<dbReference type="PANTHER" id="PTHR47966">
    <property type="entry name" value="BETA-SITE APP-CLEAVING ENZYME, ISOFORM A-RELATED"/>
    <property type="match status" value="1"/>
</dbReference>
<dbReference type="PANTHER" id="PTHR47966:SF22">
    <property type="entry name" value="PEPSIN A-3-RELATED"/>
    <property type="match status" value="1"/>
</dbReference>
<dbReference type="Pfam" id="PF07966">
    <property type="entry name" value="A1_Propeptide"/>
    <property type="match status" value="1"/>
</dbReference>
<dbReference type="Pfam" id="PF00026">
    <property type="entry name" value="Asp"/>
    <property type="match status" value="1"/>
</dbReference>
<dbReference type="PRINTS" id="PR00792">
    <property type="entry name" value="PEPSIN"/>
</dbReference>
<dbReference type="SUPFAM" id="SSF50630">
    <property type="entry name" value="Acid proteases"/>
    <property type="match status" value="1"/>
</dbReference>
<dbReference type="PROSITE" id="PS00141">
    <property type="entry name" value="ASP_PROTEASE"/>
    <property type="match status" value="2"/>
</dbReference>
<dbReference type="PROSITE" id="PS51767">
    <property type="entry name" value="PEPTIDASE_A1"/>
    <property type="match status" value="1"/>
</dbReference>
<feature type="signal peptide" evidence="2">
    <location>
        <begin position="1"/>
        <end position="15"/>
    </location>
</feature>
<feature type="propeptide" id="PRO_0000026038" description="Activation peptide" evidence="1">
    <location>
        <begin position="16"/>
        <end position="60"/>
    </location>
</feature>
<feature type="chain" id="PRO_0000026039" description="Pepsin A">
    <location>
        <begin position="61"/>
        <end position="386"/>
    </location>
</feature>
<feature type="domain" description="Peptidase A1" evidence="3">
    <location>
        <begin position="74"/>
        <end position="383"/>
    </location>
</feature>
<feature type="active site" evidence="4">
    <location>
        <position position="92"/>
    </location>
</feature>
<feature type="active site" evidence="4">
    <location>
        <position position="275"/>
    </location>
</feature>
<feature type="disulfide bond" evidence="1">
    <location>
        <begin position="105"/>
        <end position="110"/>
    </location>
</feature>
<feature type="disulfide bond" evidence="1">
    <location>
        <begin position="266"/>
        <end position="270"/>
    </location>
</feature>
<feature type="disulfide bond" evidence="1">
    <location>
        <begin position="309"/>
        <end position="342"/>
    </location>
</feature>
<protein>
    <recommendedName>
        <fullName>Pepsin A</fullName>
        <ecNumber>3.4.23.1</ecNumber>
    </recommendedName>
</protein>
<evidence type="ECO:0000250" key="1"/>
<evidence type="ECO:0000255" key="2"/>
<evidence type="ECO:0000255" key="3">
    <source>
        <dbReference type="PROSITE-ProRule" id="PRU01103"/>
    </source>
</evidence>
<evidence type="ECO:0000255" key="4">
    <source>
        <dbReference type="PROSITE-ProRule" id="PRU10094"/>
    </source>
</evidence>
<evidence type="ECO:0000305" key="5"/>
<organism>
    <name type="scientific">Rhinolophus ferrumequinum</name>
    <name type="common">Greater horseshoe bat</name>
    <dbReference type="NCBI Taxonomy" id="59479"/>
    <lineage>
        <taxon>Eukaryota</taxon>
        <taxon>Metazoa</taxon>
        <taxon>Chordata</taxon>
        <taxon>Craniata</taxon>
        <taxon>Vertebrata</taxon>
        <taxon>Euteleostomi</taxon>
        <taxon>Mammalia</taxon>
        <taxon>Eutheria</taxon>
        <taxon>Laurasiatheria</taxon>
        <taxon>Chiroptera</taxon>
        <taxon>Yinpterochiroptera</taxon>
        <taxon>Rhinolophoidea</taxon>
        <taxon>Rhinolophidae</taxon>
        <taxon>Rhinolophinae</taxon>
        <taxon>Rhinolophus</taxon>
    </lineage>
</organism>
<keyword id="KW-0064">Aspartyl protease</keyword>
<keyword id="KW-0222">Digestion</keyword>
<keyword id="KW-1015">Disulfide bond</keyword>
<keyword id="KW-0378">Hydrolase</keyword>
<keyword id="KW-0645">Protease</keyword>
<keyword id="KW-1185">Reference proteome</keyword>
<keyword id="KW-0964">Secreted</keyword>
<keyword id="KW-0732">Signal</keyword>
<keyword id="KW-0865">Zymogen</keyword>
<name>PEPA_RHIFE</name>
<comment type="function">
    <text evidence="1">Shows particularly broad specificity; although bonds involving phenylalanine and leucine are preferred, many others are also cleaved to some extent.</text>
</comment>
<comment type="catalytic activity">
    <reaction evidence="4">
        <text>Preferential cleavage: hydrophobic, preferably aromatic, residues in P1 and P1' positions. Cleaves 1-Phe-|-Val-2, 4-Gln-|-His-5, 13-Glu-|-Ala-14, 14-Ala-|-Leu-15, 15-Leu-|-Tyr-16, 16-Tyr-|-Leu-17, 23-Gly-|-Phe-24, 24-Phe-|-Phe-25 and 25-Phe-|-Tyr-26 bonds in the B chain of insulin.</text>
        <dbReference type="EC" id="3.4.23.1"/>
    </reaction>
</comment>
<comment type="subcellular location">
    <subcellularLocation>
        <location>Secreted</location>
    </subcellularLocation>
</comment>
<comment type="similarity">
    <text evidence="5">Belongs to the peptidase A1 family.</text>
</comment>
<reference key="1">
    <citation type="journal article" date="2001" name="Mol. Phylogenet. Evol.">
        <title>Phylogenetic position of Eulipotyphla inferred from the cDNA sequences of pepsinogens A and C.</title>
        <authorList>
            <person name="Narita Y."/>
            <person name="Oda S."/>
            <person name="Takenaka O."/>
            <person name="Kageyama T."/>
        </authorList>
    </citation>
    <scope>NUCLEOTIDE SEQUENCE [MRNA]</scope>
</reference>
<gene>
    <name type="primary">PGA</name>
    <name type="synonym">PGNA</name>
</gene>
<sequence>MKWLLLLSLVALSECYIYKVPLVKKKSLRKNLMEQGLLQDYLKTHSINPASKYLKEAASMMATQPLENYMDMEYFGTIGIGTPPQEFTVIFDTGSSNLWVPSVYCSSPACSNHNRFNPQQSSTYQGTNQKLSVAYGTGSMTGILGYDTVQVGGITDTNQIFGLSETEPGSFLYYAPFDGILGLAYPSIASSGATPVFDNIWNQGLVSQDLFSVYLSSNDQGGSVVMFGGIDSSYFTGNLNWVPLSSETYWQITVDSITMNGQVIACSGSCQAIVDTGTSLLSGPTNAIASIQGYIGASQNANGEMVVSCSAINTLPNIVFTINGVQYPLPPSAYVLQSQQGCTSGFQGMDIPTSSGELWILGDVFIRQYFTVFDRGNNQVGLAPVA</sequence>